<reference key="1">
    <citation type="journal article" date="2002" name="Nucleic Acids Res.">
        <title>Genome sequence of Oceanobacillus iheyensis isolated from the Iheya Ridge and its unexpected adaptive capabilities to extreme environments.</title>
        <authorList>
            <person name="Takami H."/>
            <person name="Takaki Y."/>
            <person name="Uchiyama I."/>
        </authorList>
    </citation>
    <scope>NUCLEOTIDE SEQUENCE [LARGE SCALE GENOMIC DNA]</scope>
    <source>
        <strain>DSM 14371 / CIP 107618 / JCM 11309 / KCTC 3954 / HTE831</strain>
    </source>
</reference>
<dbReference type="EC" id="3.6.1.27" evidence="1"/>
<dbReference type="EMBL" id="BA000028">
    <property type="protein sequence ID" value="BAC13155.1"/>
    <property type="molecule type" value="Genomic_DNA"/>
</dbReference>
<dbReference type="RefSeq" id="WP_011065598.1">
    <property type="nucleotide sequence ID" value="NC_004193.1"/>
</dbReference>
<dbReference type="SMR" id="Q8CXK0"/>
<dbReference type="STRING" id="221109.gene:10733438"/>
<dbReference type="KEGG" id="oih:OB1199"/>
<dbReference type="eggNOG" id="COG1968">
    <property type="taxonomic scope" value="Bacteria"/>
</dbReference>
<dbReference type="HOGENOM" id="CLU_060296_1_2_9"/>
<dbReference type="OrthoDB" id="9808289at2"/>
<dbReference type="PhylomeDB" id="Q8CXK0"/>
<dbReference type="Proteomes" id="UP000000822">
    <property type="component" value="Chromosome"/>
</dbReference>
<dbReference type="GO" id="GO:0005886">
    <property type="term" value="C:plasma membrane"/>
    <property type="evidence" value="ECO:0007669"/>
    <property type="project" value="UniProtKB-SubCell"/>
</dbReference>
<dbReference type="GO" id="GO:0050380">
    <property type="term" value="F:undecaprenyl-diphosphatase activity"/>
    <property type="evidence" value="ECO:0007669"/>
    <property type="project" value="UniProtKB-UniRule"/>
</dbReference>
<dbReference type="GO" id="GO:0071555">
    <property type="term" value="P:cell wall organization"/>
    <property type="evidence" value="ECO:0007669"/>
    <property type="project" value="UniProtKB-KW"/>
</dbReference>
<dbReference type="GO" id="GO:0009252">
    <property type="term" value="P:peptidoglycan biosynthetic process"/>
    <property type="evidence" value="ECO:0007669"/>
    <property type="project" value="UniProtKB-KW"/>
</dbReference>
<dbReference type="GO" id="GO:0008360">
    <property type="term" value="P:regulation of cell shape"/>
    <property type="evidence" value="ECO:0007669"/>
    <property type="project" value="UniProtKB-KW"/>
</dbReference>
<dbReference type="GO" id="GO:0046677">
    <property type="term" value="P:response to antibiotic"/>
    <property type="evidence" value="ECO:0007669"/>
    <property type="project" value="UniProtKB-UniRule"/>
</dbReference>
<dbReference type="HAMAP" id="MF_01006">
    <property type="entry name" value="Undec_diphosphatase"/>
    <property type="match status" value="1"/>
</dbReference>
<dbReference type="InterPro" id="IPR003824">
    <property type="entry name" value="UppP"/>
</dbReference>
<dbReference type="PANTHER" id="PTHR30622">
    <property type="entry name" value="UNDECAPRENYL-DIPHOSPHATASE"/>
    <property type="match status" value="1"/>
</dbReference>
<dbReference type="PANTHER" id="PTHR30622:SF2">
    <property type="entry name" value="UNDECAPRENYL-DIPHOSPHATASE"/>
    <property type="match status" value="1"/>
</dbReference>
<dbReference type="Pfam" id="PF02673">
    <property type="entry name" value="BacA"/>
    <property type="match status" value="1"/>
</dbReference>
<organism>
    <name type="scientific">Oceanobacillus iheyensis (strain DSM 14371 / CIP 107618 / JCM 11309 / KCTC 3954 / HTE831)</name>
    <dbReference type="NCBI Taxonomy" id="221109"/>
    <lineage>
        <taxon>Bacteria</taxon>
        <taxon>Bacillati</taxon>
        <taxon>Bacillota</taxon>
        <taxon>Bacilli</taxon>
        <taxon>Bacillales</taxon>
        <taxon>Bacillaceae</taxon>
        <taxon>Oceanobacillus</taxon>
    </lineage>
</organism>
<feature type="chain" id="PRO_0000151172" description="Undecaprenyl-diphosphatase">
    <location>
        <begin position="1"/>
        <end position="275"/>
    </location>
</feature>
<feature type="transmembrane region" description="Helical" evidence="1">
    <location>
        <begin position="8"/>
        <end position="28"/>
    </location>
</feature>
<feature type="transmembrane region" description="Helical" evidence="1">
    <location>
        <begin position="45"/>
        <end position="65"/>
    </location>
</feature>
<feature type="transmembrane region" description="Helical" evidence="1">
    <location>
        <begin position="92"/>
        <end position="112"/>
    </location>
</feature>
<feature type="transmembrane region" description="Helical" evidence="1">
    <location>
        <begin position="119"/>
        <end position="139"/>
    </location>
</feature>
<feature type="transmembrane region" description="Helical" evidence="1">
    <location>
        <begin position="197"/>
        <end position="217"/>
    </location>
</feature>
<feature type="transmembrane region" description="Helical" evidence="1">
    <location>
        <begin position="225"/>
        <end position="245"/>
    </location>
</feature>
<feature type="transmembrane region" description="Helical" evidence="1">
    <location>
        <begin position="255"/>
        <end position="275"/>
    </location>
</feature>
<keyword id="KW-0046">Antibiotic resistance</keyword>
<keyword id="KW-1003">Cell membrane</keyword>
<keyword id="KW-0133">Cell shape</keyword>
<keyword id="KW-0961">Cell wall biogenesis/degradation</keyword>
<keyword id="KW-0378">Hydrolase</keyword>
<keyword id="KW-0472">Membrane</keyword>
<keyword id="KW-0573">Peptidoglycan synthesis</keyword>
<keyword id="KW-1185">Reference proteome</keyword>
<keyword id="KW-0812">Transmembrane</keyword>
<keyword id="KW-1133">Transmembrane helix</keyword>
<protein>
    <recommendedName>
        <fullName evidence="1">Undecaprenyl-diphosphatase</fullName>
        <ecNumber evidence="1">3.6.1.27</ecNumber>
    </recommendedName>
    <alternativeName>
        <fullName evidence="1">Bacitracin resistance protein</fullName>
    </alternativeName>
    <alternativeName>
        <fullName evidence="1">Undecaprenyl pyrophosphate phosphatase</fullName>
    </alternativeName>
</protein>
<evidence type="ECO:0000255" key="1">
    <source>
        <dbReference type="HAMAP-Rule" id="MF_01006"/>
    </source>
</evidence>
<gene>
    <name evidence="1" type="primary">uppP</name>
    <name type="synonym">bacA</name>
    <name type="synonym">upk</name>
    <name type="ordered locus">OB1199</name>
</gene>
<sequence length="275" mass="30587">MNVFENFWTIVHYFVLGLVQGITEPIPISSSGHIIIFRELFGIEARGLSFEIFVNLASLLAVLIIYRKDIVRLAVNSWNFIFKQEKESKSDFMFVVYLVLATIPVGIVGVLFGDEIGAFIGEDGTTVVGITLLITAAAIWMIRNLRGRKIEGDLSTKDAVIVGLAQAVAVTPGISRSGATLVASMLMGMKQDTALRFSFLLYIPVSLGSSILEIPNIVRDPNVQELWIPYLVAFITAFIASYFALKWFMNIMRHGNLKYFAYYCVIVGVLVLIFL</sequence>
<name>UPPP_OCEIH</name>
<comment type="function">
    <text evidence="1">Catalyzes the dephosphorylation of undecaprenyl diphosphate (UPP). Confers resistance to bacitracin.</text>
</comment>
<comment type="catalytic activity">
    <reaction evidence="1">
        <text>di-trans,octa-cis-undecaprenyl diphosphate + H2O = di-trans,octa-cis-undecaprenyl phosphate + phosphate + H(+)</text>
        <dbReference type="Rhea" id="RHEA:28094"/>
        <dbReference type="ChEBI" id="CHEBI:15377"/>
        <dbReference type="ChEBI" id="CHEBI:15378"/>
        <dbReference type="ChEBI" id="CHEBI:43474"/>
        <dbReference type="ChEBI" id="CHEBI:58405"/>
        <dbReference type="ChEBI" id="CHEBI:60392"/>
        <dbReference type="EC" id="3.6.1.27"/>
    </reaction>
</comment>
<comment type="subcellular location">
    <subcellularLocation>
        <location evidence="1">Cell membrane</location>
        <topology evidence="1">Multi-pass membrane protein</topology>
    </subcellularLocation>
</comment>
<comment type="miscellaneous">
    <text>Bacitracin is thought to be involved in the inhibition of peptidoglycan synthesis by sequestering undecaprenyl diphosphate, thereby reducing the pool of lipid carrier available.</text>
</comment>
<comment type="similarity">
    <text evidence="1">Belongs to the UppP family.</text>
</comment>
<accession>Q8CXK0</accession>
<proteinExistence type="inferred from homology"/>